<keyword id="KW-0131">Cell cycle</keyword>
<keyword id="KW-0132">Cell division</keyword>
<keyword id="KW-0342">GTP-binding</keyword>
<keyword id="KW-0460">Magnesium</keyword>
<keyword id="KW-0479">Metal-binding</keyword>
<keyword id="KW-0547">Nucleotide-binding</keyword>
<keyword id="KW-1185">Reference proteome</keyword>
<keyword id="KW-0717">Septation</keyword>
<reference key="1">
    <citation type="journal article" date="2004" name="Proc. Natl. Acad. Sci. U.S.A.">
        <title>Structural flexibility in the Burkholderia mallei genome.</title>
        <authorList>
            <person name="Nierman W.C."/>
            <person name="DeShazer D."/>
            <person name="Kim H.S."/>
            <person name="Tettelin H."/>
            <person name="Nelson K.E."/>
            <person name="Feldblyum T.V."/>
            <person name="Ulrich R.L."/>
            <person name="Ronning C.M."/>
            <person name="Brinkac L.M."/>
            <person name="Daugherty S.C."/>
            <person name="Davidsen T.D."/>
            <person name="DeBoy R.T."/>
            <person name="Dimitrov G."/>
            <person name="Dodson R.J."/>
            <person name="Durkin A.S."/>
            <person name="Gwinn M.L."/>
            <person name="Haft D.H."/>
            <person name="Khouri H.M."/>
            <person name="Kolonay J.F."/>
            <person name="Madupu R."/>
            <person name="Mohammoud Y."/>
            <person name="Nelson W.C."/>
            <person name="Radune D."/>
            <person name="Romero C.M."/>
            <person name="Sarria S."/>
            <person name="Selengut J."/>
            <person name="Shamblin C."/>
            <person name="Sullivan S.A."/>
            <person name="White O."/>
            <person name="Yu Y."/>
            <person name="Zafar N."/>
            <person name="Zhou L."/>
            <person name="Fraser C.M."/>
        </authorList>
    </citation>
    <scope>NUCLEOTIDE SEQUENCE [LARGE SCALE GENOMIC DNA]</scope>
    <source>
        <strain>ATCC 23344</strain>
    </source>
</reference>
<proteinExistence type="inferred from homology"/>
<protein>
    <recommendedName>
        <fullName evidence="1">Probable GTP-binding protein EngB</fullName>
    </recommendedName>
</protein>
<accession>Q62GN6</accession>
<name>ENGB_BURMA</name>
<comment type="function">
    <text evidence="1">Necessary for normal cell division and for the maintenance of normal septation.</text>
</comment>
<comment type="cofactor">
    <cofactor evidence="1">
        <name>Mg(2+)</name>
        <dbReference type="ChEBI" id="CHEBI:18420"/>
    </cofactor>
</comment>
<comment type="similarity">
    <text evidence="1">Belongs to the TRAFAC class TrmE-Era-EngA-EngB-Septin-like GTPase superfamily. EngB GTPase family.</text>
</comment>
<organism>
    <name type="scientific">Burkholderia mallei (strain ATCC 23344)</name>
    <dbReference type="NCBI Taxonomy" id="243160"/>
    <lineage>
        <taxon>Bacteria</taxon>
        <taxon>Pseudomonadati</taxon>
        <taxon>Pseudomonadota</taxon>
        <taxon>Betaproteobacteria</taxon>
        <taxon>Burkholderiales</taxon>
        <taxon>Burkholderiaceae</taxon>
        <taxon>Burkholderia</taxon>
        <taxon>pseudomallei group</taxon>
    </lineage>
</organism>
<gene>
    <name evidence="1" type="primary">engB</name>
    <name type="ordered locus">BMA2600</name>
</gene>
<dbReference type="EMBL" id="CP000010">
    <property type="protein sequence ID" value="AAU47838.1"/>
    <property type="molecule type" value="Genomic_DNA"/>
</dbReference>
<dbReference type="RefSeq" id="YP_104135.1">
    <property type="nucleotide sequence ID" value="NC_006348.1"/>
</dbReference>
<dbReference type="SMR" id="Q62GN6"/>
<dbReference type="KEGG" id="bma:BMA2600"/>
<dbReference type="PATRIC" id="fig|243160.12.peg.2672"/>
<dbReference type="eggNOG" id="COG0218">
    <property type="taxonomic scope" value="Bacteria"/>
</dbReference>
<dbReference type="HOGENOM" id="CLU_033732_1_1_4"/>
<dbReference type="Proteomes" id="UP000006693">
    <property type="component" value="Chromosome 1"/>
</dbReference>
<dbReference type="GO" id="GO:0005829">
    <property type="term" value="C:cytosol"/>
    <property type="evidence" value="ECO:0007669"/>
    <property type="project" value="TreeGrafter"/>
</dbReference>
<dbReference type="GO" id="GO:0005525">
    <property type="term" value="F:GTP binding"/>
    <property type="evidence" value="ECO:0007669"/>
    <property type="project" value="UniProtKB-UniRule"/>
</dbReference>
<dbReference type="GO" id="GO:0046872">
    <property type="term" value="F:metal ion binding"/>
    <property type="evidence" value="ECO:0007669"/>
    <property type="project" value="UniProtKB-KW"/>
</dbReference>
<dbReference type="GO" id="GO:0000917">
    <property type="term" value="P:division septum assembly"/>
    <property type="evidence" value="ECO:0007669"/>
    <property type="project" value="UniProtKB-KW"/>
</dbReference>
<dbReference type="CDD" id="cd01876">
    <property type="entry name" value="YihA_EngB"/>
    <property type="match status" value="1"/>
</dbReference>
<dbReference type="FunFam" id="3.40.50.300:FF:000098">
    <property type="entry name" value="Probable GTP-binding protein EngB"/>
    <property type="match status" value="1"/>
</dbReference>
<dbReference type="Gene3D" id="3.40.50.300">
    <property type="entry name" value="P-loop containing nucleotide triphosphate hydrolases"/>
    <property type="match status" value="1"/>
</dbReference>
<dbReference type="HAMAP" id="MF_00321">
    <property type="entry name" value="GTPase_EngB"/>
    <property type="match status" value="1"/>
</dbReference>
<dbReference type="InterPro" id="IPR030393">
    <property type="entry name" value="G_ENGB_dom"/>
</dbReference>
<dbReference type="InterPro" id="IPR006073">
    <property type="entry name" value="GTP-bd"/>
</dbReference>
<dbReference type="InterPro" id="IPR019987">
    <property type="entry name" value="GTP-bd_ribosome_bio_YsxC"/>
</dbReference>
<dbReference type="InterPro" id="IPR027417">
    <property type="entry name" value="P-loop_NTPase"/>
</dbReference>
<dbReference type="NCBIfam" id="TIGR03598">
    <property type="entry name" value="GTPase_YsxC"/>
    <property type="match status" value="1"/>
</dbReference>
<dbReference type="PANTHER" id="PTHR11649:SF13">
    <property type="entry name" value="ENGB-TYPE G DOMAIN-CONTAINING PROTEIN"/>
    <property type="match status" value="1"/>
</dbReference>
<dbReference type="PANTHER" id="PTHR11649">
    <property type="entry name" value="MSS1/TRME-RELATED GTP-BINDING PROTEIN"/>
    <property type="match status" value="1"/>
</dbReference>
<dbReference type="Pfam" id="PF01926">
    <property type="entry name" value="MMR_HSR1"/>
    <property type="match status" value="1"/>
</dbReference>
<dbReference type="SUPFAM" id="SSF52540">
    <property type="entry name" value="P-loop containing nucleoside triphosphate hydrolases"/>
    <property type="match status" value="1"/>
</dbReference>
<dbReference type="PROSITE" id="PS51706">
    <property type="entry name" value="G_ENGB"/>
    <property type="match status" value="1"/>
</dbReference>
<feature type="chain" id="PRO_0000266833" description="Probable GTP-binding protein EngB">
    <location>
        <begin position="1"/>
        <end position="219"/>
    </location>
</feature>
<feature type="domain" description="EngB-type G" evidence="1">
    <location>
        <begin position="24"/>
        <end position="207"/>
    </location>
</feature>
<feature type="binding site" evidence="1">
    <location>
        <begin position="32"/>
        <end position="39"/>
    </location>
    <ligand>
        <name>GTP</name>
        <dbReference type="ChEBI" id="CHEBI:37565"/>
    </ligand>
</feature>
<feature type="binding site" evidence="1">
    <location>
        <position position="39"/>
    </location>
    <ligand>
        <name>Mg(2+)</name>
        <dbReference type="ChEBI" id="CHEBI:18420"/>
    </ligand>
</feature>
<feature type="binding site" evidence="1">
    <location>
        <begin position="59"/>
        <end position="63"/>
    </location>
    <ligand>
        <name>GTP</name>
        <dbReference type="ChEBI" id="CHEBI:37565"/>
    </ligand>
</feature>
<feature type="binding site" evidence="1">
    <location>
        <position position="61"/>
    </location>
    <ligand>
        <name>Mg(2+)</name>
        <dbReference type="ChEBI" id="CHEBI:18420"/>
    </ligand>
</feature>
<feature type="binding site" evidence="1">
    <location>
        <begin position="81"/>
        <end position="84"/>
    </location>
    <ligand>
        <name>GTP</name>
        <dbReference type="ChEBI" id="CHEBI:37565"/>
    </ligand>
</feature>
<feature type="binding site" evidence="1">
    <location>
        <begin position="148"/>
        <end position="151"/>
    </location>
    <ligand>
        <name>GTP</name>
        <dbReference type="ChEBI" id="CHEBI:37565"/>
    </ligand>
</feature>
<feature type="binding site" evidence="1">
    <location>
        <begin position="185"/>
        <end position="188"/>
    </location>
    <ligand>
        <name>GTP</name>
        <dbReference type="ChEBI" id="CHEBI:37565"/>
    </ligand>
</feature>
<evidence type="ECO:0000255" key="1">
    <source>
        <dbReference type="HAMAP-Rule" id="MF_00321"/>
    </source>
</evidence>
<sequence>MAFLLHQARFFTTVNHLRDLPPTVQPEVAFAGRSNAGKSTAINVLCNQKRLAFASKTPGRTQHINYFSVGPAAEPVAHLVDLPGYGYAEVPGAAKAHWEQLLSSYLQTRPQLCGMILMMDARRPLTELDRRMIEWFAPTGKPIHSLLTKCDKLTRQESINALRATQKSLDAYRDAGYAGKLTVQLFSALKRTGLDDAHALIESWVRPAAADEDRAAVAE</sequence>